<accession>B7LTL6</accession>
<gene>
    <name evidence="1" type="primary">secB</name>
    <name type="ordered locus">EFER_3603</name>
</gene>
<name>SECB_ESCF3</name>
<proteinExistence type="inferred from homology"/>
<organism>
    <name type="scientific">Escherichia fergusonii (strain ATCC 35469 / DSM 13698 / CCUG 18766 / IAM 14443 / JCM 21226 / LMG 7866 / NBRC 102419 / NCTC 12128 / CDC 0568-73)</name>
    <dbReference type="NCBI Taxonomy" id="585054"/>
    <lineage>
        <taxon>Bacteria</taxon>
        <taxon>Pseudomonadati</taxon>
        <taxon>Pseudomonadota</taxon>
        <taxon>Gammaproteobacteria</taxon>
        <taxon>Enterobacterales</taxon>
        <taxon>Enterobacteriaceae</taxon>
        <taxon>Escherichia</taxon>
    </lineage>
</organism>
<keyword id="KW-0143">Chaperone</keyword>
<keyword id="KW-0963">Cytoplasm</keyword>
<keyword id="KW-0653">Protein transport</keyword>
<keyword id="KW-0811">Translocation</keyword>
<keyword id="KW-0813">Transport</keyword>
<sequence length="155" mass="17259">MSEQNNTEMTFQIQRIYTKDISFEAPNAPHVFQKDWQPEVKLDLDTASSQLADDVYEVVLRVTVTASLGEETAFLCEVQQGGIFSIAGIEGTQMAHCLGAYCPNILFPYARECITSLVSRGTFPQLNLAPVNFDALFMNYLQQQAGEGTEEHQDA</sequence>
<evidence type="ECO:0000255" key="1">
    <source>
        <dbReference type="HAMAP-Rule" id="MF_00821"/>
    </source>
</evidence>
<reference key="1">
    <citation type="journal article" date="2009" name="PLoS Genet.">
        <title>Organised genome dynamics in the Escherichia coli species results in highly diverse adaptive paths.</title>
        <authorList>
            <person name="Touchon M."/>
            <person name="Hoede C."/>
            <person name="Tenaillon O."/>
            <person name="Barbe V."/>
            <person name="Baeriswyl S."/>
            <person name="Bidet P."/>
            <person name="Bingen E."/>
            <person name="Bonacorsi S."/>
            <person name="Bouchier C."/>
            <person name="Bouvet O."/>
            <person name="Calteau A."/>
            <person name="Chiapello H."/>
            <person name="Clermont O."/>
            <person name="Cruveiller S."/>
            <person name="Danchin A."/>
            <person name="Diard M."/>
            <person name="Dossat C."/>
            <person name="Karoui M.E."/>
            <person name="Frapy E."/>
            <person name="Garry L."/>
            <person name="Ghigo J.M."/>
            <person name="Gilles A.M."/>
            <person name="Johnson J."/>
            <person name="Le Bouguenec C."/>
            <person name="Lescat M."/>
            <person name="Mangenot S."/>
            <person name="Martinez-Jehanne V."/>
            <person name="Matic I."/>
            <person name="Nassif X."/>
            <person name="Oztas S."/>
            <person name="Petit M.A."/>
            <person name="Pichon C."/>
            <person name="Rouy Z."/>
            <person name="Ruf C.S."/>
            <person name="Schneider D."/>
            <person name="Tourret J."/>
            <person name="Vacherie B."/>
            <person name="Vallenet D."/>
            <person name="Medigue C."/>
            <person name="Rocha E.P.C."/>
            <person name="Denamur E."/>
        </authorList>
    </citation>
    <scope>NUCLEOTIDE SEQUENCE [LARGE SCALE GENOMIC DNA]</scope>
    <source>
        <strain>ATCC 35469 / DSM 13698 / BCRC 15582 / CCUG 18766 / IAM 14443 / JCM 21226 / LMG 7866 / NBRC 102419 / NCTC 12128 / CDC 0568-73</strain>
    </source>
</reference>
<feature type="chain" id="PRO_1000195324" description="Protein-export protein SecB">
    <location>
        <begin position="1"/>
        <end position="155"/>
    </location>
</feature>
<comment type="function">
    <text evidence="1">One of the proteins required for the normal export of preproteins out of the cell cytoplasm. It is a molecular chaperone that binds to a subset of precursor proteins, maintaining them in a translocation-competent state. It also specifically binds to its receptor SecA.</text>
</comment>
<comment type="subunit">
    <text evidence="1">Homotetramer, a dimer of dimers. One homotetramer interacts with 1 SecA dimer.</text>
</comment>
<comment type="subcellular location">
    <subcellularLocation>
        <location evidence="1">Cytoplasm</location>
    </subcellularLocation>
</comment>
<comment type="similarity">
    <text evidence="1">Belongs to the SecB family.</text>
</comment>
<protein>
    <recommendedName>
        <fullName evidence="1">Protein-export protein SecB</fullName>
    </recommendedName>
</protein>
<dbReference type="EMBL" id="CU928158">
    <property type="protein sequence ID" value="CAQ91075.1"/>
    <property type="molecule type" value="Genomic_DNA"/>
</dbReference>
<dbReference type="RefSeq" id="WP_000003375.1">
    <property type="nucleotide sequence ID" value="NC_011740.1"/>
</dbReference>
<dbReference type="SMR" id="B7LTL6"/>
<dbReference type="GeneID" id="75059792"/>
<dbReference type="KEGG" id="efe:EFER_3603"/>
<dbReference type="HOGENOM" id="CLU_111574_1_0_6"/>
<dbReference type="OrthoDB" id="9795145at2"/>
<dbReference type="Proteomes" id="UP000000745">
    <property type="component" value="Chromosome"/>
</dbReference>
<dbReference type="GO" id="GO:0005737">
    <property type="term" value="C:cytoplasm"/>
    <property type="evidence" value="ECO:0007669"/>
    <property type="project" value="UniProtKB-SubCell"/>
</dbReference>
<dbReference type="GO" id="GO:0051082">
    <property type="term" value="F:unfolded protein binding"/>
    <property type="evidence" value="ECO:0007669"/>
    <property type="project" value="InterPro"/>
</dbReference>
<dbReference type="GO" id="GO:0006457">
    <property type="term" value="P:protein folding"/>
    <property type="evidence" value="ECO:0007669"/>
    <property type="project" value="UniProtKB-UniRule"/>
</dbReference>
<dbReference type="GO" id="GO:0051262">
    <property type="term" value="P:protein tetramerization"/>
    <property type="evidence" value="ECO:0007669"/>
    <property type="project" value="InterPro"/>
</dbReference>
<dbReference type="GO" id="GO:0015031">
    <property type="term" value="P:protein transport"/>
    <property type="evidence" value="ECO:0007669"/>
    <property type="project" value="UniProtKB-UniRule"/>
</dbReference>
<dbReference type="CDD" id="cd00557">
    <property type="entry name" value="Translocase_SecB"/>
    <property type="match status" value="1"/>
</dbReference>
<dbReference type="FunFam" id="3.10.420.10:FF:000001">
    <property type="entry name" value="Protein-export chaperone SecB"/>
    <property type="match status" value="1"/>
</dbReference>
<dbReference type="Gene3D" id="3.10.420.10">
    <property type="entry name" value="SecB-like"/>
    <property type="match status" value="1"/>
</dbReference>
<dbReference type="HAMAP" id="MF_00821">
    <property type="entry name" value="SecB"/>
    <property type="match status" value="1"/>
</dbReference>
<dbReference type="InterPro" id="IPR003708">
    <property type="entry name" value="SecB"/>
</dbReference>
<dbReference type="InterPro" id="IPR035958">
    <property type="entry name" value="SecB-like_sf"/>
</dbReference>
<dbReference type="NCBIfam" id="NF004390">
    <property type="entry name" value="PRK05751.1-1"/>
    <property type="match status" value="1"/>
</dbReference>
<dbReference type="NCBIfam" id="NF004393">
    <property type="entry name" value="PRK05751.1-4"/>
    <property type="match status" value="1"/>
</dbReference>
<dbReference type="NCBIfam" id="TIGR00809">
    <property type="entry name" value="secB"/>
    <property type="match status" value="1"/>
</dbReference>
<dbReference type="PANTHER" id="PTHR36918">
    <property type="match status" value="1"/>
</dbReference>
<dbReference type="PANTHER" id="PTHR36918:SF1">
    <property type="entry name" value="PROTEIN-EXPORT PROTEIN SECB"/>
    <property type="match status" value="1"/>
</dbReference>
<dbReference type="Pfam" id="PF02556">
    <property type="entry name" value="SecB"/>
    <property type="match status" value="1"/>
</dbReference>
<dbReference type="PRINTS" id="PR01594">
    <property type="entry name" value="SECBCHAPRONE"/>
</dbReference>
<dbReference type="SUPFAM" id="SSF54611">
    <property type="entry name" value="SecB-like"/>
    <property type="match status" value="1"/>
</dbReference>